<proteinExistence type="inferred from homology"/>
<accession>B8ZPH5</accession>
<keyword id="KW-0028">Amino-acid biosynthesis</keyword>
<keyword id="KW-0963">Cytoplasm</keyword>
<keyword id="KW-0554">One-carbon metabolism</keyword>
<keyword id="KW-0663">Pyridoxal phosphate</keyword>
<keyword id="KW-0808">Transferase</keyword>
<gene>
    <name evidence="1" type="primary">glyA</name>
    <name type="ordered locus">SPN23F09470</name>
</gene>
<protein>
    <recommendedName>
        <fullName evidence="1">Serine hydroxymethyltransferase</fullName>
        <shortName evidence="1">SHMT</shortName>
        <shortName evidence="1">Serine methylase</shortName>
        <ecNumber evidence="1">2.1.2.1</ecNumber>
    </recommendedName>
</protein>
<organism>
    <name type="scientific">Streptococcus pneumoniae (strain ATCC 700669 / Spain 23F-1)</name>
    <dbReference type="NCBI Taxonomy" id="561276"/>
    <lineage>
        <taxon>Bacteria</taxon>
        <taxon>Bacillati</taxon>
        <taxon>Bacillota</taxon>
        <taxon>Bacilli</taxon>
        <taxon>Lactobacillales</taxon>
        <taxon>Streptococcaceae</taxon>
        <taxon>Streptococcus</taxon>
    </lineage>
</organism>
<evidence type="ECO:0000255" key="1">
    <source>
        <dbReference type="HAMAP-Rule" id="MF_00051"/>
    </source>
</evidence>
<dbReference type="EC" id="2.1.2.1" evidence="1"/>
<dbReference type="EMBL" id="FM211187">
    <property type="protein sequence ID" value="CAR68772.1"/>
    <property type="molecule type" value="Genomic_DNA"/>
</dbReference>
<dbReference type="RefSeq" id="WP_000575519.1">
    <property type="nucleotide sequence ID" value="NC_011900.1"/>
</dbReference>
<dbReference type="SMR" id="B8ZPH5"/>
<dbReference type="KEGG" id="sne:SPN23F09470"/>
<dbReference type="HOGENOM" id="CLU_022477_2_1_9"/>
<dbReference type="UniPathway" id="UPA00193"/>
<dbReference type="UniPathway" id="UPA00288">
    <property type="reaction ID" value="UER01023"/>
</dbReference>
<dbReference type="GO" id="GO:0005829">
    <property type="term" value="C:cytosol"/>
    <property type="evidence" value="ECO:0007669"/>
    <property type="project" value="TreeGrafter"/>
</dbReference>
<dbReference type="GO" id="GO:0004372">
    <property type="term" value="F:glycine hydroxymethyltransferase activity"/>
    <property type="evidence" value="ECO:0007669"/>
    <property type="project" value="UniProtKB-UniRule"/>
</dbReference>
<dbReference type="GO" id="GO:0030170">
    <property type="term" value="F:pyridoxal phosphate binding"/>
    <property type="evidence" value="ECO:0007669"/>
    <property type="project" value="UniProtKB-UniRule"/>
</dbReference>
<dbReference type="GO" id="GO:0019264">
    <property type="term" value="P:glycine biosynthetic process from serine"/>
    <property type="evidence" value="ECO:0007669"/>
    <property type="project" value="UniProtKB-UniRule"/>
</dbReference>
<dbReference type="GO" id="GO:0035999">
    <property type="term" value="P:tetrahydrofolate interconversion"/>
    <property type="evidence" value="ECO:0007669"/>
    <property type="project" value="UniProtKB-UniRule"/>
</dbReference>
<dbReference type="CDD" id="cd00378">
    <property type="entry name" value="SHMT"/>
    <property type="match status" value="1"/>
</dbReference>
<dbReference type="FunFam" id="3.40.640.10:FF:000001">
    <property type="entry name" value="Serine hydroxymethyltransferase"/>
    <property type="match status" value="1"/>
</dbReference>
<dbReference type="FunFam" id="3.90.1150.10:FF:000072">
    <property type="entry name" value="Serine hydroxymethyltransferase"/>
    <property type="match status" value="1"/>
</dbReference>
<dbReference type="Gene3D" id="3.90.1150.10">
    <property type="entry name" value="Aspartate Aminotransferase, domain 1"/>
    <property type="match status" value="1"/>
</dbReference>
<dbReference type="Gene3D" id="3.40.640.10">
    <property type="entry name" value="Type I PLP-dependent aspartate aminotransferase-like (Major domain)"/>
    <property type="match status" value="1"/>
</dbReference>
<dbReference type="HAMAP" id="MF_00051">
    <property type="entry name" value="SHMT"/>
    <property type="match status" value="1"/>
</dbReference>
<dbReference type="InterPro" id="IPR015424">
    <property type="entry name" value="PyrdxlP-dep_Trfase"/>
</dbReference>
<dbReference type="InterPro" id="IPR015421">
    <property type="entry name" value="PyrdxlP-dep_Trfase_major"/>
</dbReference>
<dbReference type="InterPro" id="IPR015422">
    <property type="entry name" value="PyrdxlP-dep_Trfase_small"/>
</dbReference>
<dbReference type="InterPro" id="IPR001085">
    <property type="entry name" value="Ser_HO-MeTrfase"/>
</dbReference>
<dbReference type="InterPro" id="IPR049943">
    <property type="entry name" value="Ser_HO-MeTrfase-like"/>
</dbReference>
<dbReference type="InterPro" id="IPR019798">
    <property type="entry name" value="Ser_HO-MeTrfase_PLP_BS"/>
</dbReference>
<dbReference type="InterPro" id="IPR039429">
    <property type="entry name" value="SHMT-like_dom"/>
</dbReference>
<dbReference type="NCBIfam" id="NF000586">
    <property type="entry name" value="PRK00011.1"/>
    <property type="match status" value="1"/>
</dbReference>
<dbReference type="PANTHER" id="PTHR11680">
    <property type="entry name" value="SERINE HYDROXYMETHYLTRANSFERASE"/>
    <property type="match status" value="1"/>
</dbReference>
<dbReference type="PANTHER" id="PTHR11680:SF35">
    <property type="entry name" value="SERINE HYDROXYMETHYLTRANSFERASE 1"/>
    <property type="match status" value="1"/>
</dbReference>
<dbReference type="Pfam" id="PF00464">
    <property type="entry name" value="SHMT"/>
    <property type="match status" value="1"/>
</dbReference>
<dbReference type="PIRSF" id="PIRSF000412">
    <property type="entry name" value="SHMT"/>
    <property type="match status" value="1"/>
</dbReference>
<dbReference type="SUPFAM" id="SSF53383">
    <property type="entry name" value="PLP-dependent transferases"/>
    <property type="match status" value="1"/>
</dbReference>
<dbReference type="PROSITE" id="PS00096">
    <property type="entry name" value="SHMT"/>
    <property type="match status" value="1"/>
</dbReference>
<comment type="function">
    <text evidence="1">Catalyzes the reversible interconversion of serine and glycine with tetrahydrofolate (THF) serving as the one-carbon carrier. This reaction serves as the major source of one-carbon groups required for the biosynthesis of purines, thymidylate, methionine, and other important biomolecules. Also exhibits THF-independent aldolase activity toward beta-hydroxyamino acids, producing glycine and aldehydes, via a retro-aldol mechanism.</text>
</comment>
<comment type="catalytic activity">
    <reaction evidence="1">
        <text>(6R)-5,10-methylene-5,6,7,8-tetrahydrofolate + glycine + H2O = (6S)-5,6,7,8-tetrahydrofolate + L-serine</text>
        <dbReference type="Rhea" id="RHEA:15481"/>
        <dbReference type="ChEBI" id="CHEBI:15377"/>
        <dbReference type="ChEBI" id="CHEBI:15636"/>
        <dbReference type="ChEBI" id="CHEBI:33384"/>
        <dbReference type="ChEBI" id="CHEBI:57305"/>
        <dbReference type="ChEBI" id="CHEBI:57453"/>
        <dbReference type="EC" id="2.1.2.1"/>
    </reaction>
</comment>
<comment type="cofactor">
    <cofactor evidence="1">
        <name>pyridoxal 5'-phosphate</name>
        <dbReference type="ChEBI" id="CHEBI:597326"/>
    </cofactor>
</comment>
<comment type="pathway">
    <text evidence="1">One-carbon metabolism; tetrahydrofolate interconversion.</text>
</comment>
<comment type="pathway">
    <text evidence="1">Amino-acid biosynthesis; glycine biosynthesis; glycine from L-serine: step 1/1.</text>
</comment>
<comment type="subunit">
    <text evidence="1">Homodimer.</text>
</comment>
<comment type="subcellular location">
    <subcellularLocation>
        <location evidence="1">Cytoplasm</location>
    </subcellularLocation>
</comment>
<comment type="similarity">
    <text evidence="1">Belongs to the SHMT family.</text>
</comment>
<sequence length="418" mass="45260">MIFDKDDFKAYDADLWNAIAKEEERQQNNIELIASENVVSKAVMAAQGSILTNKYAEGYPGRRYYGGTDVVDVVETLAIERAKEIFGAKFANVQPHSGSQANCAAYMSLIEPGDTVMGMDLASGGHLTHGAPVSFSGQTYNFVSYSVDPETELLDFDAILKQAQEVKPKLIVAGASAYSQIIDFSKFREIADAVGAKLMVDMAHIAGLVAAGLHPSPVPYAHITTTTTHKTLRGPRGGLILTNDEELAKKINSAIFPGIQGGPLEHVVAAKAVSFKEVLDPAFKEYAANVIKNSKAMADVFLQDPDFRIISGGTENHLFLVDVTKVVENGKVAQNLLDEVNITLNKNSIPYESLSPFKTSGIRIGAAAITARGFGEEESRKVAELIIKTLKNSENEAVLEEVRSAVKELTDAFLLYED</sequence>
<reference key="1">
    <citation type="journal article" date="2009" name="J. Bacteriol.">
        <title>Role of conjugative elements in the evolution of the multidrug-resistant pandemic clone Streptococcus pneumoniae Spain23F ST81.</title>
        <authorList>
            <person name="Croucher N.J."/>
            <person name="Walker D."/>
            <person name="Romero P."/>
            <person name="Lennard N."/>
            <person name="Paterson G.K."/>
            <person name="Bason N.C."/>
            <person name="Mitchell A.M."/>
            <person name="Quail M.A."/>
            <person name="Andrew P.W."/>
            <person name="Parkhill J."/>
            <person name="Bentley S.D."/>
            <person name="Mitchell T.J."/>
        </authorList>
    </citation>
    <scope>NUCLEOTIDE SEQUENCE [LARGE SCALE GENOMIC DNA]</scope>
    <source>
        <strain>ATCC 700669 / Spain 23F-1</strain>
    </source>
</reference>
<feature type="chain" id="PRO_1000117651" description="Serine hydroxymethyltransferase">
    <location>
        <begin position="1"/>
        <end position="418"/>
    </location>
</feature>
<feature type="binding site" evidence="1">
    <location>
        <position position="121"/>
    </location>
    <ligand>
        <name>(6S)-5,6,7,8-tetrahydrofolate</name>
        <dbReference type="ChEBI" id="CHEBI:57453"/>
    </ligand>
</feature>
<feature type="binding site" evidence="1">
    <location>
        <begin position="125"/>
        <end position="127"/>
    </location>
    <ligand>
        <name>(6S)-5,6,7,8-tetrahydrofolate</name>
        <dbReference type="ChEBI" id="CHEBI:57453"/>
    </ligand>
</feature>
<feature type="binding site" evidence="1">
    <location>
        <position position="246"/>
    </location>
    <ligand>
        <name>(6S)-5,6,7,8-tetrahydrofolate</name>
        <dbReference type="ChEBI" id="CHEBI:57453"/>
    </ligand>
</feature>
<feature type="binding site" evidence="1">
    <location>
        <begin position="355"/>
        <end position="357"/>
    </location>
    <ligand>
        <name>(6S)-5,6,7,8-tetrahydrofolate</name>
        <dbReference type="ChEBI" id="CHEBI:57453"/>
    </ligand>
</feature>
<feature type="site" description="Plays an important role in substrate specificity" evidence="1">
    <location>
        <position position="229"/>
    </location>
</feature>
<feature type="modified residue" description="N6-(pyridoxal phosphate)lysine" evidence="1">
    <location>
        <position position="230"/>
    </location>
</feature>
<name>GLYA_STRPJ</name>